<feature type="chain" id="PRO_0000119009" description="Structural maintenance of chromosomes protein 4">
    <location>
        <begin position="1"/>
        <end position="1290"/>
    </location>
</feature>
<feature type="domain" description="SMC hinge">
    <location>
        <begin position="607"/>
        <end position="721"/>
    </location>
</feature>
<feature type="region of interest" description="Disordered" evidence="3">
    <location>
        <begin position="1"/>
        <end position="48"/>
    </location>
</feature>
<feature type="coiled-coil region" evidence="2">
    <location>
        <begin position="264"/>
        <end position="594"/>
    </location>
</feature>
<feature type="coiled-coil region" evidence="2">
    <location>
        <begin position="764"/>
        <end position="1027"/>
    </location>
</feature>
<feature type="coiled-coil region" evidence="2">
    <location>
        <begin position="1094"/>
        <end position="1129"/>
    </location>
</feature>
<feature type="compositionally biased region" description="Basic and acidic residues" evidence="3">
    <location>
        <begin position="15"/>
        <end position="27"/>
    </location>
</feature>
<feature type="binding site" evidence="2">
    <location>
        <begin position="107"/>
        <end position="114"/>
    </location>
    <ligand>
        <name>ATP</name>
        <dbReference type="ChEBI" id="CHEBI:30616"/>
    </ligand>
</feature>
<evidence type="ECO:0000250" key="1"/>
<evidence type="ECO:0000255" key="2"/>
<evidence type="ECO:0000256" key="3">
    <source>
        <dbReference type="SAM" id="MobiDB-lite"/>
    </source>
</evidence>
<evidence type="ECO:0000269" key="4">
    <source>
    </source>
</evidence>
<evidence type="ECO:0000269" key="5">
    <source>
    </source>
</evidence>
<evidence type="ECO:0000269" key="6">
    <source>
    </source>
</evidence>
<evidence type="ECO:0000305" key="7"/>
<reference key="1">
    <citation type="journal article" date="1994" name="Cell">
        <title>A heterodimeric coiled-coil protein required for mitotic chromosome condensation in vitro.</title>
        <authorList>
            <person name="Hirano T."/>
            <person name="Mitchison T.J."/>
        </authorList>
    </citation>
    <scope>NUCLEOTIDE SEQUENCE [MRNA]</scope>
    <scope>INTERACTION WITH XCAP-E</scope>
</reference>
<reference key="2">
    <citation type="journal article" date="1997" name="Cell">
        <title>Condensins, chromosome condensation protein complexes containing XCAP-C, XCAP-E and a Xenopus homolog of the Drosophila Barren protein.</title>
        <authorList>
            <person name="Hirano T."/>
            <person name="Kobayashi R."/>
            <person name="Hirano M."/>
        </authorList>
    </citation>
    <scope>IDENTIFICATION IN A CONDENSIN COMPLEX WITH XCAP-E; XCAP-H; XCAP-D2 AND XCAP-G</scope>
</reference>
<reference key="3">
    <citation type="journal article" date="1998" name="Science">
        <title>Phosphorylation and activation of 13S condensin by Cdc2 in vitro.</title>
        <authorList>
            <person name="Kimura K."/>
            <person name="Hirano M."/>
            <person name="Kobayashi R."/>
            <person name="Hirano T."/>
        </authorList>
    </citation>
    <scope>FUNCTION OF THE CONDENSIN COMPLEX</scope>
</reference>
<reference key="4">
    <citation type="journal article" date="1999" name="Cell">
        <title>13S condensin actively reconfigures DNA by introducing global positive writhe: implications for chromosome condensation.</title>
        <authorList>
            <person name="Kimura K."/>
            <person name="Rybenkov V.V."/>
            <person name="Crisona N.J."/>
            <person name="Hirano T."/>
            <person name="Cozzarelli N.R."/>
        </authorList>
    </citation>
    <scope>FUNCTION OF THE CONDENSIN COMPLEX</scope>
</reference>
<protein>
    <recommendedName>
        <fullName>Structural maintenance of chromosomes protein 4</fullName>
        <shortName>SMC protein 4</shortName>
        <shortName>SMC-4</shortName>
    </recommendedName>
    <alternativeName>
        <fullName>Chromosome assembly protein XCAP-C</fullName>
    </alternativeName>
    <alternativeName>
        <fullName>Chromosome-associated protein C</fullName>
    </alternativeName>
</protein>
<dbReference type="EMBL" id="U13673">
    <property type="protein sequence ID" value="AAA64679.1"/>
    <property type="molecule type" value="mRNA"/>
</dbReference>
<dbReference type="PIR" id="A55094">
    <property type="entry name" value="A55094"/>
</dbReference>
<dbReference type="RefSeq" id="NP_001081371.1">
    <property type="nucleotide sequence ID" value="NM_001087902.1"/>
</dbReference>
<dbReference type="SMR" id="P50532"/>
<dbReference type="BioGRID" id="99138">
    <property type="interactions" value="7"/>
</dbReference>
<dbReference type="IntAct" id="P50532">
    <property type="interactions" value="3"/>
</dbReference>
<dbReference type="GeneID" id="397799"/>
<dbReference type="KEGG" id="xla:397799"/>
<dbReference type="AGR" id="Xenbase:XB-GENE-5865892"/>
<dbReference type="CTD" id="397799"/>
<dbReference type="Xenbase" id="XB-GENE-5865892">
    <property type="gene designation" value="smc4.L"/>
</dbReference>
<dbReference type="OrthoDB" id="5575062at2759"/>
<dbReference type="Proteomes" id="UP000186698">
    <property type="component" value="Chromosome 5L"/>
</dbReference>
<dbReference type="Bgee" id="397799">
    <property type="expression patterns" value="Expressed in egg cell and 19 other cell types or tissues"/>
</dbReference>
<dbReference type="GO" id="GO:0000796">
    <property type="term" value="C:condensin complex"/>
    <property type="evidence" value="ECO:0000318"/>
    <property type="project" value="GO_Central"/>
</dbReference>
<dbReference type="GO" id="GO:0005829">
    <property type="term" value="C:cytosol"/>
    <property type="evidence" value="ECO:0000304"/>
    <property type="project" value="Reactome"/>
</dbReference>
<dbReference type="GO" id="GO:0005634">
    <property type="term" value="C:nucleus"/>
    <property type="evidence" value="ECO:0007669"/>
    <property type="project" value="UniProtKB-SubCell"/>
</dbReference>
<dbReference type="GO" id="GO:0005524">
    <property type="term" value="F:ATP binding"/>
    <property type="evidence" value="ECO:0007669"/>
    <property type="project" value="UniProtKB-KW"/>
</dbReference>
<dbReference type="GO" id="GO:0016887">
    <property type="term" value="F:ATP hydrolysis activity"/>
    <property type="evidence" value="ECO:0007669"/>
    <property type="project" value="InterPro"/>
</dbReference>
<dbReference type="GO" id="GO:0051301">
    <property type="term" value="P:cell division"/>
    <property type="evidence" value="ECO:0007669"/>
    <property type="project" value="UniProtKB-KW"/>
</dbReference>
<dbReference type="GO" id="GO:0007076">
    <property type="term" value="P:mitotic chromosome condensation"/>
    <property type="evidence" value="ECO:0000250"/>
    <property type="project" value="UniProtKB"/>
</dbReference>
<dbReference type="FunFam" id="1.20.1060.20:FF:000003">
    <property type="entry name" value="Structural maintenance of chromosomes 4"/>
    <property type="match status" value="1"/>
</dbReference>
<dbReference type="FunFam" id="3.30.70.1620:FF:000003">
    <property type="entry name" value="Structural maintenance of chromosomes 4"/>
    <property type="match status" value="1"/>
</dbReference>
<dbReference type="FunFam" id="3.40.50.300:FF:000481">
    <property type="entry name" value="Structural maintenance of chromosomes 4"/>
    <property type="match status" value="1"/>
</dbReference>
<dbReference type="FunFam" id="3.40.50.300:FF:000585">
    <property type="entry name" value="Structural maintenance of chromosomes 4"/>
    <property type="match status" value="1"/>
</dbReference>
<dbReference type="Gene3D" id="1.20.1060.20">
    <property type="match status" value="1"/>
</dbReference>
<dbReference type="Gene3D" id="3.30.70.1620">
    <property type="match status" value="1"/>
</dbReference>
<dbReference type="Gene3D" id="3.40.50.300">
    <property type="entry name" value="P-loop containing nucleotide triphosphate hydrolases"/>
    <property type="match status" value="2"/>
</dbReference>
<dbReference type="InterPro" id="IPR027417">
    <property type="entry name" value="P-loop_NTPase"/>
</dbReference>
<dbReference type="InterPro" id="IPR003395">
    <property type="entry name" value="RecF/RecN/SMC_N"/>
</dbReference>
<dbReference type="InterPro" id="IPR024704">
    <property type="entry name" value="SMC"/>
</dbReference>
<dbReference type="InterPro" id="IPR010935">
    <property type="entry name" value="SMC_hinge"/>
</dbReference>
<dbReference type="InterPro" id="IPR036277">
    <property type="entry name" value="SMC_hinge_sf"/>
</dbReference>
<dbReference type="PANTHER" id="PTHR18937:SF172">
    <property type="entry name" value="STRUCTURAL MAINTENANCE OF CHROMOSOMES PROTEIN"/>
    <property type="match status" value="1"/>
</dbReference>
<dbReference type="PANTHER" id="PTHR18937">
    <property type="entry name" value="STRUCTURAL MAINTENANCE OF CHROMOSOMES SMC FAMILY MEMBER"/>
    <property type="match status" value="1"/>
</dbReference>
<dbReference type="Pfam" id="PF06470">
    <property type="entry name" value="SMC_hinge"/>
    <property type="match status" value="1"/>
</dbReference>
<dbReference type="Pfam" id="PF02463">
    <property type="entry name" value="SMC_N"/>
    <property type="match status" value="1"/>
</dbReference>
<dbReference type="PIRSF" id="PIRSF005719">
    <property type="entry name" value="SMC"/>
    <property type="match status" value="1"/>
</dbReference>
<dbReference type="SMART" id="SM00968">
    <property type="entry name" value="SMC_hinge"/>
    <property type="match status" value="1"/>
</dbReference>
<dbReference type="SUPFAM" id="SSF52540">
    <property type="entry name" value="P-loop containing nucleoside triphosphate hydrolases"/>
    <property type="match status" value="1"/>
</dbReference>
<dbReference type="SUPFAM" id="SSF75553">
    <property type="entry name" value="Smc hinge domain"/>
    <property type="match status" value="1"/>
</dbReference>
<dbReference type="SUPFAM" id="SSF57997">
    <property type="entry name" value="Tropomyosin"/>
    <property type="match status" value="1"/>
</dbReference>
<accession>P50532</accession>
<keyword id="KW-0067">ATP-binding</keyword>
<keyword id="KW-0131">Cell cycle</keyword>
<keyword id="KW-0132">Cell division</keyword>
<keyword id="KW-0158">Chromosome</keyword>
<keyword id="KW-0175">Coiled coil</keyword>
<keyword id="KW-0963">Cytoplasm</keyword>
<keyword id="KW-0226">DNA condensation</keyword>
<keyword id="KW-0498">Mitosis</keyword>
<keyword id="KW-0547">Nucleotide-binding</keyword>
<keyword id="KW-0539">Nucleus</keyword>
<keyword id="KW-1185">Reference proteome</keyword>
<name>SMC4_XENLA</name>
<sequence>MPPKKTKTSTAVAREATESPMAERSRAPDALQADPPAPTQESNNELVDSRSLEEILSGIPPPPPPAMTNEAGAPRLMITHIVNQNFKSYAGERILGPFHKRFSCIIGPNGSGKSNVIDSMLFVFGYRAQKIRSKKLSVLIHNSDEHKDVQSCTVEVHFQKIIDKEGDDFEVIPNSNFYVSRTAYKDNSSVYHISGKKATFKDVGLLLRSHGIDLDHNRFLILQGEVEQIAMMKPKGQTEHDEGMLEYLEDIIGSERLKEPIQILCRRVELLNEQRGEKLNRVKMVEKEKDALEGEKNKAIEFLTVENETFKKKNQLCQYYIHDLQKRSRDKEAQKEKIQEDTKDISEKSNTLLETMKEKNKALKDVEKQLNKITKFIEENREKFTQLDLQDVDTREKLKHSKSKVKKLQKQLQKDKEKVDELKNVPANSQKIIAEETNKKDLLEKQKEKEEEKLKNVMDSLKKETQGLQEEKEVKEKELMEISKTVNEARSKMDVAQSELDIYLSRHNSALSQLNKAKEALNTASATLKERRAAIKELETKLPKDEGDLKKREKELESLVSEEGNIKNQVRELRQKVEEARSSLSANRSRGKVLDALIQQKKSGKIPGIFGRLGDLGAIDEKYDVAISSSCGALDHIVVDTIDTAQECVNFLKKQNVGVATFIGLDKMKVWEKGLNKIQTPENIPRLFDMVKVKDEQIKPAFYFALRDTIVANNLDQATRVAFQKDKRWRVVTLQGQIIEQSGTMTGGGGKVMKGRMGSSVMVEISDDQLQKMENKLKTDTTRATEIQDRKAHLEEEVAKLRQATREMKNTFEKYTASLQSLSEQEVHLKAQVKELEVNVAAAAPDKNQQKQMEKNLETLKKEYEKVAEKAGKVEAEVKRLHKLIVDINNHKLKAQQDKLDKVTKEIDECASAITKAQVSIKTADRNLKKSEEAVARTEKEIVANDKSIEELTEDLKKLEEKATTVMNECKEAECSLPEVQEQHRSLLQEIKAIQEKEHALQKEALNIRLNIEQIDSHIAEHQSKIKYWQKEITKISLHKIEDIPEEVLPGLAQEELEAIKDPDQIINQIALLEAKSHEMKPNLGAIAEYKKKEELYLQRVAELDEITNERDSFRRAYEDLRKQRLNEFMAGFNIITNKLKENYQMLTLGGDAELELVDSLDPFSEGIMFSVRPPKKSWKKIFNLSGGEKTLSSLALVFALHHYKPTPLYFMDEIDAALDFKNVSIVAFYIYEQTKNAQFIIISLRNNMFEIADRLIGIYKTHNTTKSVATNPKIIAAKGLAEMQSVGCA</sequence>
<organism>
    <name type="scientific">Xenopus laevis</name>
    <name type="common">African clawed frog</name>
    <dbReference type="NCBI Taxonomy" id="8355"/>
    <lineage>
        <taxon>Eukaryota</taxon>
        <taxon>Metazoa</taxon>
        <taxon>Chordata</taxon>
        <taxon>Craniata</taxon>
        <taxon>Vertebrata</taxon>
        <taxon>Euteleostomi</taxon>
        <taxon>Amphibia</taxon>
        <taxon>Batrachia</taxon>
        <taxon>Anura</taxon>
        <taxon>Pipoidea</taxon>
        <taxon>Pipidae</taxon>
        <taxon>Xenopodinae</taxon>
        <taxon>Xenopus</taxon>
        <taxon>Xenopus</taxon>
    </lineage>
</organism>
<comment type="function">
    <text evidence="4 6">Central component of the condensin complex, a complex required for conversion of interphase chromatin into mitotic-like condense chromosomes. The condensin complex probably introduces positive supercoils into relaxed DNA in the presence of type I topoisomerases and converts nicked DNA into positive knotted forms in the presence of type II topoisomerase.</text>
</comment>
<comment type="subunit">
    <text evidence="5">Forms a heterodimer with XCAP-E/SMC2. Component of the condensin complex, which contains the XCAP-E/SMC2 and XCAP-C/SMC4 heterodimer, and three non SMC subunits that probably regulate the complex: XCAP-H/BRRN1, XCAP-D2/CNAP1 and XCAP-G/CAPG.</text>
</comment>
<comment type="subcellular location">
    <subcellularLocation>
        <location evidence="1">Nucleus</location>
    </subcellularLocation>
    <subcellularLocation>
        <location evidence="1">Cytoplasm</location>
    </subcellularLocation>
    <subcellularLocation>
        <location evidence="1">Chromosome</location>
    </subcellularLocation>
    <text evidence="1">In interphase cells, the majority of the condensin complex is found in the cytoplasm, while a minority of the complex is associated with chromatin. A subpopulation of the complex however remains associated with chromosome foci in interphase cells. During mitosis, most of the condensin complex is associated with the chromatin. At the onset of prophase, the regulatory subunits of the complex are phosphorylated by CDC2, leading to condensin's association with chromosome arms and to chromosome condensation. Dissociation from chromosomes is observed in late telophase (By similarity).</text>
</comment>
<comment type="domain">
    <text evidence="1">The SMC hinge domain, which separates the large intramolecular coiled coil regions, allows the heterodimerization with XCAP-E, forming a V-shaped heterodimer.</text>
</comment>
<comment type="similarity">
    <text evidence="7">Belongs to the SMC family. SMC4 subfamily.</text>
</comment>
<proteinExistence type="evidence at protein level"/>
<gene>
    <name type="primary">smc4</name>
    <name type="synonym">capc</name>
    <name type="synonym">smc4l1</name>
</gene>